<keyword id="KW-0010">Activator</keyword>
<keyword id="KW-0963">Cytoplasm</keyword>
<keyword id="KW-0472">Membrane</keyword>
<keyword id="KW-0479">Metal-binding</keyword>
<keyword id="KW-0507">mRNA processing</keyword>
<keyword id="KW-0597">Phosphoprotein</keyword>
<keyword id="KW-1185">Reference proteome</keyword>
<keyword id="KW-0677">Repeat</keyword>
<keyword id="KW-0678">Repressor</keyword>
<keyword id="KW-0687">Ribonucleoprotein</keyword>
<keyword id="KW-0694">RNA-binding</keyword>
<keyword id="KW-0770">Synapse</keyword>
<keyword id="KW-0810">Translation regulation</keyword>
<keyword id="KW-0862">Zinc</keyword>
<protein>
    <recommendedName>
        <fullName>Cytoplasmic polyadenylation element-binding protein 1</fullName>
        <shortName>CPE-BP1</shortName>
        <shortName>CPE-binding protein 1</shortName>
        <shortName>mCPEB</shortName>
        <shortName>mCPEB-1</shortName>
    </recommendedName>
</protein>
<organism>
    <name type="scientific">Mus musculus</name>
    <name type="common">Mouse</name>
    <dbReference type="NCBI Taxonomy" id="10090"/>
    <lineage>
        <taxon>Eukaryota</taxon>
        <taxon>Metazoa</taxon>
        <taxon>Chordata</taxon>
        <taxon>Craniata</taxon>
        <taxon>Vertebrata</taxon>
        <taxon>Euteleostomi</taxon>
        <taxon>Mammalia</taxon>
        <taxon>Eutheria</taxon>
        <taxon>Euarchontoglires</taxon>
        <taxon>Glires</taxon>
        <taxon>Rodentia</taxon>
        <taxon>Myomorpha</taxon>
        <taxon>Muroidea</taxon>
        <taxon>Muridae</taxon>
        <taxon>Murinae</taxon>
        <taxon>Mus</taxon>
        <taxon>Mus</taxon>
    </lineage>
</organism>
<comment type="function">
    <text evidence="2 5 6 7">Sequence-specific RNA-binding protein that regulates mRNA cytoplasmic polyadenylation and translation initiation during oocyte maturation, early development and at postsynapse sites of neurons. Binds to the cytoplasmic polyadenylation element (CPE), an uridine-rich sequence element (consensus sequence 5'-UUUUUAU-3') within the 3'-UTR of mRNAs. In absence of phosphorylation and in association with TACC3 is also involved as a repressor of translation of CPE-containing mRNA; a repression that is relieved by phosphorylation or degradation (By similarity). Involved in the transport of CPE-containing mRNA to dendrites; those mRNAs may be transported to dendrites in a translationally dormant form and translationally activated at synapses. Its interaction with APLP1 promotes local CPE-containing mRNA polyadenylation and translation activation. Induces the assembly of stress granules in the absence of stress (By similarity). Required for cell cycle progression, specifically for prophase entry (By similarity).</text>
</comment>
<comment type="subunit">
    <text evidence="2 7 12 13 14">Interacts with kinesin, dynein, APLP1, APLP2, TENT2/GLD2 and APP. Both phosphorylated and non phosphorylated forms interact with APLP1 (PubMed:12629046, PubMed:16314516, PubMed:16705177, PubMed:17927953). Interacts with TENT4B; the interaction is required for TENT4B-mediated translational control (By similarity).</text>
</comment>
<comment type="subcellular location">
    <subcellularLocation>
        <location evidence="1">Cytoplasm</location>
    </subcellularLocation>
    <subcellularLocation>
        <location evidence="1">Synapse</location>
    </subcellularLocation>
    <subcellularLocation>
        <location evidence="1">Cytoplasm</location>
        <location evidence="1">P-body</location>
    </subcellularLocation>
    <subcellularLocation>
        <location evidence="1">Cytoplasmic granule</location>
    </subcellularLocation>
    <subcellularLocation>
        <location evidence="1">Membrane</location>
    </subcellularLocation>
    <subcellularLocation>
        <location evidence="1">Postsynaptic density</location>
    </subcellularLocation>
    <text evidence="1">Localizes in synaptosomes at dendritic synapses of neurons. Strongly enriched in postsynaptic density (PSD) fractions. Transported into dendrites in a microtubule-dependent fashion and colocalizes in mRNA-containing particles with TACC3, dynein and kinesin. Membrane-associated. Colocalizes at excitatory synapses with members of the polyadenylation and translation complex factors (CPSF, APLP1, TACC3, AURKA, SYP, etc.) including CPE-containing RNAs. In P-bodies and stress granules (By similarity). Recruited to stress granules (SGs) upon arsenite treatment (By similarity).</text>
</comment>
<comment type="tissue specificity">
    <text evidence="5 6 9 15 16">Expressed in hippocampus, cerebral cortex and oocytes (at protein level). Expressed in brain, heart, kidney, lung and ovary and testis. Weakly expressed in granular cells of dentate gyrus and the pyramidal cells of CA3 and CA1 of the hippocampus.</text>
</comment>
<comment type="developmental stage">
    <text evidence="8">Expressed in embryonic ovaries at 14.5, 16.5 and 18.5 dpc (at protein level).</text>
</comment>
<comment type="induction">
    <text>Not induced by kainate.</text>
</comment>
<comment type="domain">
    <text evidence="2">The 2 RRM domains and the C-terminal region mediate interaction with CPE-containing RNA. The interdomain linker (411-429) acts as a hinge to fix the relative orientation of the 2 RRMs. The ZZ domain (509-566) coordinates 2 Zn ions and is probably implicated in mediating interactions with other proteins in addition to increasing the affinity of the RRMs for the CPEs. A continuous hydrophobic interface is formed between the 2 RRM.</text>
</comment>
<comment type="PTM">
    <text evidence="1 5 6 8 10 11 12">Phosphorylated on serine/threonine residues by AURKA within positions 165 and 196 (By similarity). Phosphorylation and dephosphorylation on Thr-171 regulates cytoplasmic polyadenylation and translation of CPE-containing mRNAs. Phosphorylation on Thr-171 by AURKA in embryonic ovaries at 16.5 dpc (mostly pachytene oocytes) activates CPEB1. Not phosphorylated on Thr-171 in embryonic ovaries between 18.5 dpc (diplotene oocytes) and metaphase I. Dephosphorylation on Thr-171 by PP1 in embryonic ovaries at 18.5 dpc (mostly diplotene oocytes) inactivates CPEB1. In maturing oocytes, re-phosphorylation on Thr-171 by AURKA reactivates CPEB1. Phosphorylation on Thr-171 by CAMK2A in depolarized hippocampal neurons activates CPEB1. Dephosphorylation on Thr-171 (indirectly by PP1) in hippocampal neurons inactivates CPEB1. Phosphorylation on Thr-171 may be promoted by APLP1. Phosphorylation increases binding to RNA.</text>
</comment>
<comment type="similarity">
    <text evidence="17">Belongs to the RRM CPEB family.</text>
</comment>
<dbReference type="EMBL" id="Y08260">
    <property type="protein sequence ID" value="CAA69588.1"/>
    <property type="molecule type" value="mRNA"/>
</dbReference>
<dbReference type="EMBL" id="AK077799">
    <property type="protein sequence ID" value="BAC37017.1"/>
    <property type="molecule type" value="mRNA"/>
</dbReference>
<dbReference type="CCDS" id="CCDS40007.1"/>
<dbReference type="RefSeq" id="NP_001239454.1">
    <property type="nucleotide sequence ID" value="NM_001252525.1"/>
</dbReference>
<dbReference type="RefSeq" id="NP_001239455.1">
    <property type="nucleotide sequence ID" value="NM_001252526.1"/>
</dbReference>
<dbReference type="RefSeq" id="NP_031781.1">
    <property type="nucleotide sequence ID" value="NM_007755.5"/>
</dbReference>
<dbReference type="BMRB" id="P70166"/>
<dbReference type="SMR" id="P70166"/>
<dbReference type="BioGRID" id="198856">
    <property type="interactions" value="7"/>
</dbReference>
<dbReference type="DIP" id="DIP-41380N"/>
<dbReference type="FunCoup" id="P70166">
    <property type="interactions" value="570"/>
</dbReference>
<dbReference type="IntAct" id="P70166">
    <property type="interactions" value="1"/>
</dbReference>
<dbReference type="MINT" id="P70166"/>
<dbReference type="STRING" id="10090.ENSMUSP00000137079"/>
<dbReference type="GlyGen" id="P70166">
    <property type="glycosylation" value="1 site"/>
</dbReference>
<dbReference type="iPTMnet" id="P70166"/>
<dbReference type="PhosphoSitePlus" id="P70166"/>
<dbReference type="PaxDb" id="10090-ENSMUSP00000095936"/>
<dbReference type="ProteomicsDB" id="283814"/>
<dbReference type="Ensembl" id="ENSMUST00000098331.10">
    <property type="protein sequence ID" value="ENSMUSP00000095936.4"/>
    <property type="gene ID" value="ENSMUSG00000025586.18"/>
</dbReference>
<dbReference type="GeneID" id="12877"/>
<dbReference type="KEGG" id="mmu:12877"/>
<dbReference type="UCSC" id="uc009ibw.2">
    <property type="organism name" value="mouse"/>
</dbReference>
<dbReference type="AGR" id="MGI:108442"/>
<dbReference type="CTD" id="64506"/>
<dbReference type="MGI" id="MGI:108442">
    <property type="gene designation" value="Cpeb1"/>
</dbReference>
<dbReference type="VEuPathDB" id="HostDB:ENSMUSG00000025586"/>
<dbReference type="eggNOG" id="KOG0129">
    <property type="taxonomic scope" value="Eukaryota"/>
</dbReference>
<dbReference type="GeneTree" id="ENSGT00940000155524"/>
<dbReference type="InParanoid" id="P70166"/>
<dbReference type="OMA" id="SVWPNWD"/>
<dbReference type="OrthoDB" id="10033548at2759"/>
<dbReference type="TreeFam" id="TF317658"/>
<dbReference type="BioGRID-ORCS" id="12877">
    <property type="hits" value="1 hit in 77 CRISPR screens"/>
</dbReference>
<dbReference type="ChiTaRS" id="Cpeb1">
    <property type="organism name" value="mouse"/>
</dbReference>
<dbReference type="PRO" id="PR:P70166"/>
<dbReference type="Proteomes" id="UP000000589">
    <property type="component" value="Chromosome 7"/>
</dbReference>
<dbReference type="RNAct" id="P70166">
    <property type="molecule type" value="protein"/>
</dbReference>
<dbReference type="Bgee" id="ENSMUSG00000025586">
    <property type="expression patterns" value="Expressed in primary oocyte and 170 other cell types or tissues"/>
</dbReference>
<dbReference type="ExpressionAtlas" id="P70166">
    <property type="expression patterns" value="baseline and differential"/>
</dbReference>
<dbReference type="GO" id="GO:0005737">
    <property type="term" value="C:cytoplasm"/>
    <property type="evidence" value="ECO:0000314"/>
    <property type="project" value="UniProtKB"/>
</dbReference>
<dbReference type="GO" id="GO:0098978">
    <property type="term" value="C:glutamatergic synapse"/>
    <property type="evidence" value="ECO:0000314"/>
    <property type="project" value="SynGO"/>
</dbReference>
<dbReference type="GO" id="GO:0072687">
    <property type="term" value="C:meiotic spindle"/>
    <property type="evidence" value="ECO:0000314"/>
    <property type="project" value="MGI"/>
</dbReference>
<dbReference type="GO" id="GO:0016020">
    <property type="term" value="C:membrane"/>
    <property type="evidence" value="ECO:0000314"/>
    <property type="project" value="MGI"/>
</dbReference>
<dbReference type="GO" id="GO:0005634">
    <property type="term" value="C:nucleus"/>
    <property type="evidence" value="ECO:0000314"/>
    <property type="project" value="UniProtKB"/>
</dbReference>
<dbReference type="GO" id="GO:0000932">
    <property type="term" value="C:P-body"/>
    <property type="evidence" value="ECO:0007669"/>
    <property type="project" value="UniProtKB-SubCell"/>
</dbReference>
<dbReference type="GO" id="GO:0014069">
    <property type="term" value="C:postsynaptic density"/>
    <property type="evidence" value="ECO:0007669"/>
    <property type="project" value="UniProtKB-SubCell"/>
</dbReference>
<dbReference type="GO" id="GO:1990904">
    <property type="term" value="C:ribonucleoprotein complex"/>
    <property type="evidence" value="ECO:0007669"/>
    <property type="project" value="UniProtKB-KW"/>
</dbReference>
<dbReference type="GO" id="GO:0046872">
    <property type="term" value="F:metal ion binding"/>
    <property type="evidence" value="ECO:0007669"/>
    <property type="project" value="UniProtKB-KW"/>
</dbReference>
<dbReference type="GO" id="GO:0035925">
    <property type="term" value="F:mRNA 3'-UTR AU-rich region binding"/>
    <property type="evidence" value="ECO:0000314"/>
    <property type="project" value="UniProtKB"/>
</dbReference>
<dbReference type="GO" id="GO:0003729">
    <property type="term" value="F:mRNA binding"/>
    <property type="evidence" value="ECO:0000314"/>
    <property type="project" value="MGI"/>
</dbReference>
<dbReference type="GO" id="GO:0000900">
    <property type="term" value="F:mRNA regulatory element binding translation repressor activity"/>
    <property type="evidence" value="ECO:0000314"/>
    <property type="project" value="UniProtKB"/>
</dbReference>
<dbReference type="GO" id="GO:0003723">
    <property type="term" value="F:RNA binding"/>
    <property type="evidence" value="ECO:0000314"/>
    <property type="project" value="MGI"/>
</dbReference>
<dbReference type="GO" id="GO:0071230">
    <property type="term" value="P:cellular response to amino acid stimulus"/>
    <property type="evidence" value="ECO:0000314"/>
    <property type="project" value="UniProtKB"/>
</dbReference>
<dbReference type="GO" id="GO:0071456">
    <property type="term" value="P:cellular response to hypoxia"/>
    <property type="evidence" value="ECO:0000314"/>
    <property type="project" value="UniProtKB"/>
</dbReference>
<dbReference type="GO" id="GO:0032869">
    <property type="term" value="P:cellular response to insulin stimulus"/>
    <property type="evidence" value="ECO:0000250"/>
    <property type="project" value="UniProtKB"/>
</dbReference>
<dbReference type="GO" id="GO:0006397">
    <property type="term" value="P:mRNA processing"/>
    <property type="evidence" value="ECO:0007669"/>
    <property type="project" value="UniProtKB-KW"/>
</dbReference>
<dbReference type="GO" id="GO:2000766">
    <property type="term" value="P:negative regulation of cytoplasmic translation"/>
    <property type="evidence" value="ECO:0000314"/>
    <property type="project" value="UniProtKB"/>
</dbReference>
<dbReference type="GO" id="GO:0031440">
    <property type="term" value="P:regulation of mRNA 3'-end processing"/>
    <property type="evidence" value="ECO:0000250"/>
    <property type="project" value="UniProtKB"/>
</dbReference>
<dbReference type="GO" id="GO:0048168">
    <property type="term" value="P:regulation of neuronal synaptic plasticity"/>
    <property type="evidence" value="ECO:0000315"/>
    <property type="project" value="MGI"/>
</dbReference>
<dbReference type="GO" id="GO:0006417">
    <property type="term" value="P:regulation of translation"/>
    <property type="evidence" value="ECO:0000314"/>
    <property type="project" value="MGI"/>
</dbReference>
<dbReference type="GO" id="GO:0099547">
    <property type="term" value="P:regulation of translation at synapse, modulating synaptic transmission"/>
    <property type="evidence" value="ECO:0000314"/>
    <property type="project" value="SynGO"/>
</dbReference>
<dbReference type="GO" id="GO:0007130">
    <property type="term" value="P:synaptonemal complex assembly"/>
    <property type="evidence" value="ECO:0000315"/>
    <property type="project" value="MGI"/>
</dbReference>
<dbReference type="CDD" id="cd19757">
    <property type="entry name" value="Bbox1"/>
    <property type="match status" value="1"/>
</dbReference>
<dbReference type="CDD" id="cd12723">
    <property type="entry name" value="RRM1_CPEB1"/>
    <property type="match status" value="1"/>
</dbReference>
<dbReference type="CDD" id="cd12725">
    <property type="entry name" value="RRM2_CPEB1"/>
    <property type="match status" value="1"/>
</dbReference>
<dbReference type="FunFam" id="3.30.70.330:FF:000054">
    <property type="entry name" value="Cytoplasmic polyadenylation element-binding protein 1"/>
    <property type="match status" value="1"/>
</dbReference>
<dbReference type="FunFam" id="3.30.70.330:FF:000086">
    <property type="entry name" value="Putative Cytoplasmic polyadenylation element-binding protein 1"/>
    <property type="match status" value="1"/>
</dbReference>
<dbReference type="FunFam" id="4.10.640.40:FF:000002">
    <property type="entry name" value="Putative Cytoplasmic polyadenylation element-binding protein 1"/>
    <property type="match status" value="1"/>
</dbReference>
<dbReference type="Gene3D" id="3.30.70.330">
    <property type="match status" value="2"/>
</dbReference>
<dbReference type="Gene3D" id="4.10.640.40">
    <property type="entry name" value="Cytoplasmic polyadenylation element-binding protein, ZZ domain"/>
    <property type="match status" value="1"/>
</dbReference>
<dbReference type="InterPro" id="IPR032292">
    <property type="entry name" value="CEBP1_N"/>
</dbReference>
<dbReference type="InterPro" id="IPR032296">
    <property type="entry name" value="CEBP_ZZ"/>
</dbReference>
<dbReference type="InterPro" id="IPR038446">
    <property type="entry name" value="CEBP_ZZ_sf"/>
</dbReference>
<dbReference type="InterPro" id="IPR034819">
    <property type="entry name" value="CPEB"/>
</dbReference>
<dbReference type="InterPro" id="IPR034977">
    <property type="entry name" value="CPEB1_RRM1"/>
</dbReference>
<dbReference type="InterPro" id="IPR012677">
    <property type="entry name" value="Nucleotide-bd_a/b_plait_sf"/>
</dbReference>
<dbReference type="InterPro" id="IPR035979">
    <property type="entry name" value="RBD_domain_sf"/>
</dbReference>
<dbReference type="InterPro" id="IPR000504">
    <property type="entry name" value="RRM_dom"/>
</dbReference>
<dbReference type="PANTHER" id="PTHR12566">
    <property type="entry name" value="CYTOPLASMIC POLYADENYLATION ELEMENT BINDING PROTEIN CPEB"/>
    <property type="match status" value="1"/>
</dbReference>
<dbReference type="PANTHER" id="PTHR12566:SF9">
    <property type="entry name" value="CYTOPLASMIC POLYADENYLATION ELEMENT-BINDING PROTEIN 1"/>
    <property type="match status" value="1"/>
</dbReference>
<dbReference type="Pfam" id="PF16368">
    <property type="entry name" value="CEBP1_N"/>
    <property type="match status" value="1"/>
</dbReference>
<dbReference type="Pfam" id="PF16366">
    <property type="entry name" value="CEBP_ZZ"/>
    <property type="match status" value="1"/>
</dbReference>
<dbReference type="Pfam" id="PF16367">
    <property type="entry name" value="RRM_7"/>
    <property type="match status" value="1"/>
</dbReference>
<dbReference type="SMART" id="SM00360">
    <property type="entry name" value="RRM"/>
    <property type="match status" value="2"/>
</dbReference>
<dbReference type="SUPFAM" id="SSF54928">
    <property type="entry name" value="RNA-binding domain, RBD"/>
    <property type="match status" value="1"/>
</dbReference>
<dbReference type="PROSITE" id="PS50102">
    <property type="entry name" value="RRM"/>
    <property type="match status" value="2"/>
</dbReference>
<sequence>MAFSLEEAAGRIKDCWDNQEVPALSTCSNANIFRRINAILDDSLDFSKVCTTPINRGIHDQLPDFQDSEETVTSRMLFPTSAQESPRGLPDANGLCLGLQSLSLTGWDRPWSTQDSDSSAQSSTQSVLSMLQNPLGNVLGKAPLSFLSLDPLGSDLDKFPAPSVRGSRLDTRPILDSRSSSPSDSDTSGFSSGSDHLSDLISSLRISPPLPFLSMTGNGPRDPLKMGVGSRMDQEQAALAAVAPSPTSAPKRWPGASVWPSWDLLGAPKDPFSIEREARLHRQAAAVNEATCTWSGQLPPRNYKNPIYSCKVFLGGVPWDITEAGLVNTFRVFGSLSVEWPGKDGKHPRCPPKGNMPKGYVYLVFELEKSVRALLQACSHDPLSPDGLSEYYFKMSSRRMRCKEVQVIPWVLADSNFVWSPSQRLDPSRTVFVGALHGMLNAEALAAILNDLFGGVVYAGIDTDKHKYPIGSGRVTFNNQRSYLKAVTAAFVEIKTTKFTKKVQIDPYLEDSLCLICSSQPGPFFCRDQVCFKYFCRSCWHWRHSMEGLRHHSPLMRNQKN</sequence>
<gene>
    <name type="primary">Cpeb1</name>
    <name type="synonym">Cpeb</name>
</gene>
<feature type="chain" id="PRO_0000269252" description="Cytoplasmic polyadenylation element-binding protein 1">
    <location>
        <begin position="1"/>
        <end position="561"/>
    </location>
</feature>
<feature type="domain" description="RRM 1" evidence="3">
    <location>
        <begin position="310"/>
        <end position="407"/>
    </location>
</feature>
<feature type="domain" description="RRM 2" evidence="3">
    <location>
        <begin position="429"/>
        <end position="510"/>
    </location>
</feature>
<feature type="region of interest" description="Disordered" evidence="4">
    <location>
        <begin position="159"/>
        <end position="194"/>
    </location>
</feature>
<feature type="region of interest" description="Necessary for stress granule assembly and correct localization in dcp1 bodies" evidence="1">
    <location>
        <begin position="329"/>
        <end position="561"/>
    </location>
</feature>
<feature type="compositionally biased region" description="Low complexity" evidence="4">
    <location>
        <begin position="176"/>
        <end position="194"/>
    </location>
</feature>
<feature type="binding site" evidence="2">
    <location>
        <position position="514"/>
    </location>
    <ligand>
        <name>Zn(2+)</name>
        <dbReference type="ChEBI" id="CHEBI:29105"/>
        <label>1</label>
    </ligand>
</feature>
<feature type="binding site" evidence="2">
    <location>
        <position position="517"/>
    </location>
    <ligand>
        <name>Zn(2+)</name>
        <dbReference type="ChEBI" id="CHEBI:29105"/>
        <label>1</label>
    </ligand>
</feature>
<feature type="binding site" evidence="2">
    <location>
        <position position="526"/>
    </location>
    <ligand>
        <name>Zn(2+)</name>
        <dbReference type="ChEBI" id="CHEBI:29105"/>
        <label>2</label>
    </ligand>
</feature>
<feature type="binding site" evidence="2">
    <location>
        <position position="531"/>
    </location>
    <ligand>
        <name>Zn(2+)</name>
        <dbReference type="ChEBI" id="CHEBI:29105"/>
        <label>2</label>
    </ligand>
</feature>
<feature type="binding site" evidence="2">
    <location>
        <position position="536"/>
    </location>
    <ligand>
        <name>Zn(2+)</name>
        <dbReference type="ChEBI" id="CHEBI:29105"/>
        <label>1</label>
    </ligand>
</feature>
<feature type="binding site" evidence="2">
    <location>
        <position position="539"/>
    </location>
    <ligand>
        <name>Zn(2+)</name>
        <dbReference type="ChEBI" id="CHEBI:29105"/>
        <label>1</label>
    </ligand>
</feature>
<feature type="binding site" evidence="2">
    <location>
        <position position="544"/>
    </location>
    <ligand>
        <name>Zn(2+)</name>
        <dbReference type="ChEBI" id="CHEBI:29105"/>
        <label>2</label>
    </ligand>
</feature>
<feature type="binding site" evidence="2">
    <location>
        <position position="552"/>
    </location>
    <ligand>
        <name>Zn(2+)</name>
        <dbReference type="ChEBI" id="CHEBI:29105"/>
        <label>2</label>
    </ligand>
</feature>
<feature type="site" description="Important for the positionning of RRM1 relative to RRM2" evidence="2">
    <location>
        <position position="410"/>
    </location>
</feature>
<feature type="modified residue" description="Phosphoserine" evidence="2">
    <location>
        <position position="43"/>
    </location>
</feature>
<feature type="modified residue" description="Phosphothreonine; by AURKA and CAMK2A" evidence="6 8 10 11">
    <location>
        <position position="171"/>
    </location>
</feature>
<feature type="mutagenesis site" description="Inhibits CPE-containing cytoplasmic polyadenylation and translation activation." evidence="8 10">
    <original>T</original>
    <variation>A</variation>
    <location>
        <position position="171"/>
    </location>
</feature>
<proteinExistence type="evidence at protein level"/>
<name>CPEB1_MOUSE</name>
<evidence type="ECO:0000250" key="1"/>
<evidence type="ECO:0000250" key="2">
    <source>
        <dbReference type="UniProtKB" id="Q9BZB8"/>
    </source>
</evidence>
<evidence type="ECO:0000255" key="3">
    <source>
        <dbReference type="PROSITE-ProRule" id="PRU00176"/>
    </source>
</evidence>
<evidence type="ECO:0000256" key="4">
    <source>
        <dbReference type="SAM" id="MobiDB-lite"/>
    </source>
</evidence>
<evidence type="ECO:0000269" key="5">
    <source>
    </source>
</evidence>
<evidence type="ECO:0000269" key="6">
    <source>
    </source>
</evidence>
<evidence type="ECO:0000269" key="7">
    <source>
    </source>
</evidence>
<evidence type="ECO:0000269" key="8">
    <source>
    </source>
</evidence>
<evidence type="ECO:0000269" key="9">
    <source>
    </source>
</evidence>
<evidence type="ECO:0000269" key="10">
    <source>
    </source>
</evidence>
<evidence type="ECO:0000269" key="11">
    <source>
    </source>
</evidence>
<evidence type="ECO:0000269" key="12">
    <source>
    </source>
</evidence>
<evidence type="ECO:0000269" key="13">
    <source>
    </source>
</evidence>
<evidence type="ECO:0000269" key="14">
    <source>
    </source>
</evidence>
<evidence type="ECO:0000269" key="15">
    <source>
    </source>
</evidence>
<evidence type="ECO:0000269" key="16">
    <source>
    </source>
</evidence>
<evidence type="ECO:0000305" key="17"/>
<reference key="1">
    <citation type="journal article" date="1996" name="Proc. Natl. Acad. Sci. U.S.A.">
        <title>Mouse cytoplasmic polyadenylation element binding protein: an evolutionarily conserved protein that interacts with the cytoplasmic polyadenylation elements of c-mos mRNA.</title>
        <authorList>
            <person name="Gebauer F."/>
            <person name="Richter J.D."/>
        </authorList>
    </citation>
    <scope>NUCLEOTIDE SEQUENCE [MRNA]</scope>
    <scope>RNA-BINDING</scope>
    <scope>TISSUE SPECIFICITY</scope>
    <source>
        <tissue>Ovary</tissue>
    </source>
</reference>
<reference key="2">
    <citation type="journal article" date="2005" name="Science">
        <title>The transcriptional landscape of the mammalian genome.</title>
        <authorList>
            <person name="Carninci P."/>
            <person name="Kasukawa T."/>
            <person name="Katayama S."/>
            <person name="Gough J."/>
            <person name="Frith M.C."/>
            <person name="Maeda N."/>
            <person name="Oyama R."/>
            <person name="Ravasi T."/>
            <person name="Lenhard B."/>
            <person name="Wells C."/>
            <person name="Kodzius R."/>
            <person name="Shimokawa K."/>
            <person name="Bajic V.B."/>
            <person name="Brenner S.E."/>
            <person name="Batalov S."/>
            <person name="Forrest A.R."/>
            <person name="Zavolan M."/>
            <person name="Davis M.J."/>
            <person name="Wilming L.G."/>
            <person name="Aidinis V."/>
            <person name="Allen J.E."/>
            <person name="Ambesi-Impiombato A."/>
            <person name="Apweiler R."/>
            <person name="Aturaliya R.N."/>
            <person name="Bailey T.L."/>
            <person name="Bansal M."/>
            <person name="Baxter L."/>
            <person name="Beisel K.W."/>
            <person name="Bersano T."/>
            <person name="Bono H."/>
            <person name="Chalk A.M."/>
            <person name="Chiu K.P."/>
            <person name="Choudhary V."/>
            <person name="Christoffels A."/>
            <person name="Clutterbuck D.R."/>
            <person name="Crowe M.L."/>
            <person name="Dalla E."/>
            <person name="Dalrymple B.P."/>
            <person name="de Bono B."/>
            <person name="Della Gatta G."/>
            <person name="di Bernardo D."/>
            <person name="Down T."/>
            <person name="Engstrom P."/>
            <person name="Fagiolini M."/>
            <person name="Faulkner G."/>
            <person name="Fletcher C.F."/>
            <person name="Fukushima T."/>
            <person name="Furuno M."/>
            <person name="Futaki S."/>
            <person name="Gariboldi M."/>
            <person name="Georgii-Hemming P."/>
            <person name="Gingeras T.R."/>
            <person name="Gojobori T."/>
            <person name="Green R.E."/>
            <person name="Gustincich S."/>
            <person name="Harbers M."/>
            <person name="Hayashi Y."/>
            <person name="Hensch T.K."/>
            <person name="Hirokawa N."/>
            <person name="Hill D."/>
            <person name="Huminiecki L."/>
            <person name="Iacono M."/>
            <person name="Ikeo K."/>
            <person name="Iwama A."/>
            <person name="Ishikawa T."/>
            <person name="Jakt M."/>
            <person name="Kanapin A."/>
            <person name="Katoh M."/>
            <person name="Kawasawa Y."/>
            <person name="Kelso J."/>
            <person name="Kitamura H."/>
            <person name="Kitano H."/>
            <person name="Kollias G."/>
            <person name="Krishnan S.P."/>
            <person name="Kruger A."/>
            <person name="Kummerfeld S.K."/>
            <person name="Kurochkin I.V."/>
            <person name="Lareau L.F."/>
            <person name="Lazarevic D."/>
            <person name="Lipovich L."/>
            <person name="Liu J."/>
            <person name="Liuni S."/>
            <person name="McWilliam S."/>
            <person name="Madan Babu M."/>
            <person name="Madera M."/>
            <person name="Marchionni L."/>
            <person name="Matsuda H."/>
            <person name="Matsuzawa S."/>
            <person name="Miki H."/>
            <person name="Mignone F."/>
            <person name="Miyake S."/>
            <person name="Morris K."/>
            <person name="Mottagui-Tabar S."/>
            <person name="Mulder N."/>
            <person name="Nakano N."/>
            <person name="Nakauchi H."/>
            <person name="Ng P."/>
            <person name="Nilsson R."/>
            <person name="Nishiguchi S."/>
            <person name="Nishikawa S."/>
            <person name="Nori F."/>
            <person name="Ohara O."/>
            <person name="Okazaki Y."/>
            <person name="Orlando V."/>
            <person name="Pang K.C."/>
            <person name="Pavan W.J."/>
            <person name="Pavesi G."/>
            <person name="Pesole G."/>
            <person name="Petrovsky N."/>
            <person name="Piazza S."/>
            <person name="Reed J."/>
            <person name="Reid J.F."/>
            <person name="Ring B.Z."/>
            <person name="Ringwald M."/>
            <person name="Rost B."/>
            <person name="Ruan Y."/>
            <person name="Salzberg S.L."/>
            <person name="Sandelin A."/>
            <person name="Schneider C."/>
            <person name="Schoenbach C."/>
            <person name="Sekiguchi K."/>
            <person name="Semple C.A."/>
            <person name="Seno S."/>
            <person name="Sessa L."/>
            <person name="Sheng Y."/>
            <person name="Shibata Y."/>
            <person name="Shimada H."/>
            <person name="Shimada K."/>
            <person name="Silva D."/>
            <person name="Sinclair B."/>
            <person name="Sperling S."/>
            <person name="Stupka E."/>
            <person name="Sugiura K."/>
            <person name="Sultana R."/>
            <person name="Takenaka Y."/>
            <person name="Taki K."/>
            <person name="Tammoja K."/>
            <person name="Tan S.L."/>
            <person name="Tang S."/>
            <person name="Taylor M.S."/>
            <person name="Tegner J."/>
            <person name="Teichmann S.A."/>
            <person name="Ueda H.R."/>
            <person name="van Nimwegen E."/>
            <person name="Verardo R."/>
            <person name="Wei C.L."/>
            <person name="Yagi K."/>
            <person name="Yamanishi H."/>
            <person name="Zabarovsky E."/>
            <person name="Zhu S."/>
            <person name="Zimmer A."/>
            <person name="Hide W."/>
            <person name="Bult C."/>
            <person name="Grimmond S.M."/>
            <person name="Teasdale R.D."/>
            <person name="Liu E.T."/>
            <person name="Brusic V."/>
            <person name="Quackenbush J."/>
            <person name="Wahlestedt C."/>
            <person name="Mattick J.S."/>
            <person name="Hume D.A."/>
            <person name="Kai C."/>
            <person name="Sasaki D."/>
            <person name="Tomaru Y."/>
            <person name="Fukuda S."/>
            <person name="Kanamori-Katayama M."/>
            <person name="Suzuki M."/>
            <person name="Aoki J."/>
            <person name="Arakawa T."/>
            <person name="Iida J."/>
            <person name="Imamura K."/>
            <person name="Itoh M."/>
            <person name="Kato T."/>
            <person name="Kawaji H."/>
            <person name="Kawagashira N."/>
            <person name="Kawashima T."/>
            <person name="Kojima M."/>
            <person name="Kondo S."/>
            <person name="Konno H."/>
            <person name="Nakano K."/>
            <person name="Ninomiya N."/>
            <person name="Nishio T."/>
            <person name="Okada M."/>
            <person name="Plessy C."/>
            <person name="Shibata K."/>
            <person name="Shiraki T."/>
            <person name="Suzuki S."/>
            <person name="Tagami M."/>
            <person name="Waki K."/>
            <person name="Watahiki A."/>
            <person name="Okamura-Oho Y."/>
            <person name="Suzuki H."/>
            <person name="Kawai J."/>
            <person name="Hayashizaki Y."/>
        </authorList>
    </citation>
    <scope>NUCLEOTIDE SEQUENCE [LARGE SCALE MRNA] OF 422-561</scope>
    <source>
        <strain>C57BL/6J</strain>
        <tissue>Thymus</tissue>
    </source>
</reference>
<reference key="3">
    <citation type="journal article" date="1998" name="Neuron">
        <title>CPEB-mediated cytoplasmic polyadenylation and the regulation of experience-dependent translation of alpha-CaMKII mRNA at synapses.</title>
        <authorList>
            <person name="Wu L."/>
            <person name="Wells D."/>
            <person name="Tay J."/>
            <person name="Mendis D."/>
            <person name="Abbott M.-A."/>
            <person name="Barnitt A."/>
            <person name="Quinlan E."/>
            <person name="Heynen A."/>
            <person name="Fallon J.R."/>
            <person name="Richter J.D."/>
        </authorList>
    </citation>
    <scope>RNA-BINDING</scope>
    <scope>SUBCELLULAR LOCATION</scope>
    <scope>TISSUE SPECIFICITY</scope>
</reference>
<reference key="4">
    <citation type="journal article" date="2001" name="Development">
        <title>CPEB phosphorylation and cytoplasmic polyadenylation are catalyzed by the kinase IAK1/Eg2 in maturing mouse oocytes.</title>
        <authorList>
            <person name="Hodgman R."/>
            <person name="Tay J."/>
            <person name="Mendez R."/>
            <person name="Richter J.D."/>
        </authorList>
    </citation>
    <scope>FUNCTION</scope>
    <scope>PHOSPHORYLATION</scope>
    <scope>TISSUE SPECIFICITY</scope>
</reference>
<reference key="5">
    <citation type="journal article" date="2002" name="EMBO J.">
        <title>N-methyl-D-aspartate receptor signaling results in Aurora kinase-catalyzed CPEB phosphorylation and alpha CaMKII mRNA polyadenylation at synapses.</title>
        <authorList>
            <person name="Huang Y.-S."/>
            <person name="Jung M.-Y."/>
            <person name="Sarkissian M."/>
            <person name="Richter J.D."/>
        </authorList>
    </citation>
    <scope>FUNCTION</scope>
    <scope>PHOSPHORYLATION AT THR-171 BY AURKA MUTAGENESIS OF THR-171</scope>
    <scope>SUBCELLULAR LOCATION</scope>
    <scope>TISSUE SPECIFICITY</scope>
</reference>
<reference key="6">
    <citation type="journal article" date="2003" name="Genes Dev.">
        <title>Facilitation of dendritic mRNA transport by CPEB.</title>
        <authorList>
            <person name="Huang Y.-S."/>
            <person name="Carson J.H."/>
            <person name="Barbarese E."/>
            <person name="Richter J.D."/>
        </authorList>
    </citation>
    <scope>FUNCTION</scope>
    <scope>INTERACTION WITH DYNEIN AND KINESIN</scope>
    <scope>RNA-BINDING</scope>
    <scope>SUBCELLULAR LOCATION</scope>
</reference>
<reference key="7">
    <citation type="journal article" date="2003" name="Genes Dev.">
        <title>Regulated CPEB phosphorylation during meiotic progression suggests a mechanism for temporal control of maternal mRNA translation.</title>
        <authorList>
            <person name="Tay J."/>
            <person name="Hodgman R."/>
            <person name="Sarkissian M."/>
            <person name="Richter J.D."/>
        </authorList>
    </citation>
    <scope>PHOSPHORYLATION AT THR-171 BY AURKA</scope>
    <scope>DEPHOSPHORYLATION AT THR-171 BY PP1</scope>
    <scope>MUTAGENESIS OF THR-171</scope>
    <scope>DEVELOPMENTAL STAGE</scope>
</reference>
<reference key="8">
    <citation type="journal article" date="2003" name="Proc. Natl. Acad. Sci. U.S.A.">
        <title>Two previously undescribed members of the mouse CPEB family of genes and their inducible expression in the principal cell layers of the hippocampus.</title>
        <authorList>
            <person name="Theis M."/>
            <person name="Si K."/>
            <person name="Kandel E.R."/>
        </authorList>
    </citation>
    <scope>TISSUE SPECIFICITY</scope>
    <scope>ABSENCE OF KAINATE INDUCTION</scope>
    <source>
        <strain>BALB/cJ</strain>
        <tissue>Brain</tissue>
    </source>
</reference>
<reference key="9">
    <citation type="journal article" date="2004" name="J. Neurosci.">
        <title>Cytoplasmic polyadenylation element binding protein-dependent protein synthesis is regulated by calcium/calmodulin-dependent protein kinase II.</title>
        <authorList>
            <person name="Atkins C.M."/>
            <person name="Nozaki N."/>
            <person name="Shigeri Y."/>
            <person name="Soderling T.R."/>
        </authorList>
    </citation>
    <scope>PHOSPHORYLATION AT THR-171 BY CAMK2A</scope>
    <scope>MUTAGENESIS OF THR-171</scope>
    <scope>SUBCELLULAR LOCATION</scope>
</reference>
<reference key="10">
    <citation type="journal article" date="2005" name="J. Neurosci.">
        <title>Bidirectional regulation of cytoplasmic polyadenylation element-binding protein phosphorylation by Ca2+/calmodulin-dependent protein kinase II and protein phosphatase 1 during hippocampal long-term potentiation.</title>
        <authorList>
            <person name="Atkins C.M."/>
            <person name="Davare M.A."/>
            <person name="Oh M.C."/>
            <person name="Derkach V."/>
            <person name="Soderling T.R."/>
        </authorList>
    </citation>
    <scope>PHOSPHORYLATION AT THR-171 BY CAMK2A</scope>
    <scope>DEPHOSPHORYLATION AT THR-171</scope>
</reference>
<reference key="11">
    <citation type="journal article" date="2005" name="Mol. Cell. Biol.">
        <title>Amyloid precursor proteins anchor CPEB to membranes and promote polyadenylation-induced translation.</title>
        <authorList>
            <person name="Cao Q."/>
            <person name="Huang Y.-S."/>
            <person name="Kan M.-C."/>
            <person name="Richter J.D."/>
        </authorList>
    </citation>
    <scope>INTERACTION WITH APLP1; APLP2 AND APP</scope>
    <scope>PHOSPHORYLATION</scope>
    <scope>SUBCELLULAR LOCATION</scope>
</reference>
<reference key="12">
    <citation type="journal article" date="2006" name="Mol. Cell. Biol.">
        <title>Translational control by neuroguidin, a eukaryotic initiation factor 4E and CPEB binding protein.</title>
        <authorList>
            <person name="Jung M.-Y."/>
            <person name="Lorenz L."/>
            <person name="Richter J.D."/>
        </authorList>
    </citation>
    <scope>INTERACTION WITH NGDN</scope>
</reference>
<reference key="13">
    <citation type="journal article" date="2007" name="Biochem. Biophys. Res. Commun.">
        <title>Disruption of mouse poly(A) polymerase mGLD-2 does not alter polyadenylation status in oocytes and somatic cells.</title>
        <authorList>
            <person name="Nakanishi T."/>
            <person name="Kumagai S."/>
            <person name="Kimura M."/>
            <person name="Watanabe H."/>
            <person name="Sakurai T."/>
            <person name="Kimura M."/>
            <person name="Kashiwabara S."/>
            <person name="Baba T."/>
        </authorList>
    </citation>
    <scope>INTERACTION WITH TENT2</scope>
</reference>
<accession>P70166</accession>
<accession>Q8C5P9</accession>